<gene>
    <name type="primary">MC1R</name>
</gene>
<protein>
    <recommendedName>
        <fullName>Melanocyte-stimulating hormone receptor</fullName>
        <shortName>MSH-R</shortName>
    </recommendedName>
    <alternativeName>
        <fullName>Melanocortin receptor 1</fullName>
        <shortName>MC1-R</shortName>
    </alternativeName>
</protein>
<reference key="1">
    <citation type="journal article" date="2003" name="Am. J. Phys. Anthropol.">
        <title>Evolution of a pigmentation gene, the melanocortin-1 receptor, in primates.</title>
        <authorList>
            <person name="Mundy N.I."/>
            <person name="Kelly J."/>
        </authorList>
    </citation>
    <scope>NUCLEOTIDE SEQUENCE [GENOMIC DNA]</scope>
    <source>
        <strain>Isolate 1</strain>
    </source>
</reference>
<name>MSHR_COLGU</name>
<accession>Q864J0</accession>
<comment type="function">
    <text evidence="1">Receptor for MSH (alpha, beta and gamma) and ACTH. The activity of this receptor is mediated by G proteins which activate adenylate cyclase. Mediates melanogenesis, the production of eumelanin (black/brown) and phaeomelanin (red/yellow), via regulation of cAMP signaling in melanocytes.</text>
</comment>
<comment type="subunit">
    <text evidence="1">Interacts with MGRN1, but does not undergo MGRN1-mediated ubiquitination; this interaction competes with GNAS-binding and thus inhibits agonist-induced cAMP production. Interacts with OPN3; the interaction results in a decrease in MC1R-mediated cAMP signaling and ultimately a decrease in melanin production in melanocytes.</text>
</comment>
<comment type="subcellular location">
    <subcellularLocation>
        <location evidence="1">Cell membrane</location>
        <topology evidence="2">Multi-pass membrane protein</topology>
    </subcellularLocation>
</comment>
<comment type="similarity">
    <text evidence="3">Belongs to the G-protein coupled receptor 1 family.</text>
</comment>
<organism>
    <name type="scientific">Colobus guereza</name>
    <name type="common">Mantled guereza</name>
    <name type="synonym">Eastern black-and-white colobus monkey</name>
    <dbReference type="NCBI Taxonomy" id="33548"/>
    <lineage>
        <taxon>Eukaryota</taxon>
        <taxon>Metazoa</taxon>
        <taxon>Chordata</taxon>
        <taxon>Craniata</taxon>
        <taxon>Vertebrata</taxon>
        <taxon>Euteleostomi</taxon>
        <taxon>Mammalia</taxon>
        <taxon>Eutheria</taxon>
        <taxon>Euarchontoglires</taxon>
        <taxon>Primates</taxon>
        <taxon>Haplorrhini</taxon>
        <taxon>Catarrhini</taxon>
        <taxon>Cercopithecidae</taxon>
        <taxon>Colobinae</taxon>
        <taxon>Colobus</taxon>
    </lineage>
</organism>
<sequence>MPVQGSQRRLLGSLNSTPTATPKLGLAANQTGAWCLEVSIPDGLFLSLGLVSLVENVLVVAAIAKNRNLHSPMYCFICCLALSDLLVSGSNMLETAVILLLEAGALAARAAVVQQLDNVIDVITCSSMLSSLCFLGAIAVDRYISIFYALRYHSIVTLPRAQRVVAAIWVASVLFSTLFIAYYDHAAVLLCLVVFFLAMLVLMAVLYVHMLARACQHAQGIAQLHKRQRPAHQGFGLKGAATLTILLGIFFLCWGPFFLHLTLIVLCPQHPTCSCIFKNFNLFLALIICNAIIDPLIYAFRSQELRRTLKEVLLCSW</sequence>
<keyword id="KW-1003">Cell membrane</keyword>
<keyword id="KW-0297">G-protein coupled receptor</keyword>
<keyword id="KW-0325">Glycoprotein</keyword>
<keyword id="KW-0449">Lipoprotein</keyword>
<keyword id="KW-0472">Membrane</keyword>
<keyword id="KW-0564">Palmitate</keyword>
<keyword id="KW-0675">Receptor</keyword>
<keyword id="KW-0807">Transducer</keyword>
<keyword id="KW-0812">Transmembrane</keyword>
<keyword id="KW-1133">Transmembrane helix</keyword>
<feature type="chain" id="PRO_0000069808" description="Melanocyte-stimulating hormone receptor">
    <location>
        <begin position="1"/>
        <end position="317"/>
    </location>
</feature>
<feature type="topological domain" description="Extracellular" evidence="2">
    <location>
        <begin position="1"/>
        <end position="37"/>
    </location>
</feature>
<feature type="transmembrane region" description="Helical; Name=1" evidence="2">
    <location>
        <begin position="38"/>
        <end position="63"/>
    </location>
</feature>
<feature type="topological domain" description="Cytoplasmic" evidence="2">
    <location>
        <begin position="64"/>
        <end position="72"/>
    </location>
</feature>
<feature type="transmembrane region" description="Helical; Name=2" evidence="2">
    <location>
        <begin position="73"/>
        <end position="93"/>
    </location>
</feature>
<feature type="topological domain" description="Extracellular" evidence="2">
    <location>
        <begin position="94"/>
        <end position="118"/>
    </location>
</feature>
<feature type="transmembrane region" description="Helical; Name=3" evidence="2">
    <location>
        <begin position="119"/>
        <end position="140"/>
    </location>
</feature>
<feature type="topological domain" description="Cytoplasmic" evidence="2">
    <location>
        <begin position="141"/>
        <end position="163"/>
    </location>
</feature>
<feature type="transmembrane region" description="Helical; Name=4" evidence="2">
    <location>
        <begin position="164"/>
        <end position="183"/>
    </location>
</feature>
<feature type="topological domain" description="Extracellular" evidence="2">
    <location>
        <begin position="184"/>
        <end position="191"/>
    </location>
</feature>
<feature type="transmembrane region" description="Helical; Name=5" evidence="2">
    <location>
        <begin position="192"/>
        <end position="211"/>
    </location>
</feature>
<feature type="topological domain" description="Cytoplasmic" evidence="2">
    <location>
        <begin position="212"/>
        <end position="240"/>
    </location>
</feature>
<feature type="transmembrane region" description="Helical; Name=6" evidence="2">
    <location>
        <begin position="241"/>
        <end position="266"/>
    </location>
</feature>
<feature type="topological domain" description="Extracellular" evidence="2">
    <location>
        <begin position="267"/>
        <end position="279"/>
    </location>
</feature>
<feature type="transmembrane region" description="Helical; Name=7" evidence="2">
    <location>
        <begin position="280"/>
        <end position="300"/>
    </location>
</feature>
<feature type="topological domain" description="Cytoplasmic" evidence="2">
    <location>
        <begin position="301"/>
        <end position="317"/>
    </location>
</feature>
<feature type="lipid moiety-binding region" description="S-palmitoyl cysteine" evidence="2">
    <location>
        <position position="315"/>
    </location>
</feature>
<feature type="glycosylation site" description="N-linked (GlcNAc...) asparagine" evidence="2">
    <location>
        <position position="29"/>
    </location>
</feature>
<proteinExistence type="inferred from homology"/>
<dbReference type="EMBL" id="AY205107">
    <property type="protein sequence ID" value="AAP30981.1"/>
    <property type="molecule type" value="Genomic_DNA"/>
</dbReference>
<dbReference type="SMR" id="Q864J0"/>
<dbReference type="GlyCosmos" id="Q864J0">
    <property type="glycosylation" value="1 site, No reported glycans"/>
</dbReference>
<dbReference type="GO" id="GO:0005886">
    <property type="term" value="C:plasma membrane"/>
    <property type="evidence" value="ECO:0000250"/>
    <property type="project" value="UniProtKB"/>
</dbReference>
<dbReference type="GO" id="GO:0004980">
    <property type="term" value="F:melanocyte-stimulating hormone receptor activity"/>
    <property type="evidence" value="ECO:0007669"/>
    <property type="project" value="InterPro"/>
</dbReference>
<dbReference type="GO" id="GO:0007189">
    <property type="term" value="P:adenylate cyclase-activating G protein-coupled receptor signaling pathway"/>
    <property type="evidence" value="ECO:0007669"/>
    <property type="project" value="UniProtKB-ARBA"/>
</dbReference>
<dbReference type="CDD" id="cd15351">
    <property type="entry name" value="7tmA_MC1R"/>
    <property type="match status" value="1"/>
</dbReference>
<dbReference type="FunFam" id="1.20.1070.10:FF:000211">
    <property type="entry name" value="Melanocyte-stimulating hormone receptor"/>
    <property type="match status" value="1"/>
</dbReference>
<dbReference type="Gene3D" id="1.20.1070.10">
    <property type="entry name" value="Rhodopsin 7-helix transmembrane proteins"/>
    <property type="match status" value="1"/>
</dbReference>
<dbReference type="InterPro" id="IPR000276">
    <property type="entry name" value="GPCR_Rhodpsn"/>
</dbReference>
<dbReference type="InterPro" id="IPR017452">
    <property type="entry name" value="GPCR_Rhodpsn_7TM"/>
</dbReference>
<dbReference type="InterPro" id="IPR001671">
    <property type="entry name" value="Melcrt_ACTH_rcpt"/>
</dbReference>
<dbReference type="InterPro" id="IPR000761">
    <property type="entry name" value="MSH_rcpt"/>
</dbReference>
<dbReference type="PANTHER" id="PTHR22750">
    <property type="entry name" value="G-PROTEIN COUPLED RECEPTOR"/>
    <property type="match status" value="1"/>
</dbReference>
<dbReference type="Pfam" id="PF00001">
    <property type="entry name" value="7tm_1"/>
    <property type="match status" value="2"/>
</dbReference>
<dbReference type="PRINTS" id="PR00237">
    <property type="entry name" value="GPCRRHODOPSN"/>
</dbReference>
<dbReference type="PRINTS" id="PR00534">
    <property type="entry name" value="MCRFAMILY"/>
</dbReference>
<dbReference type="PRINTS" id="PR00536">
    <property type="entry name" value="MELNOCYTESHR"/>
</dbReference>
<dbReference type="SMART" id="SM01381">
    <property type="entry name" value="7TM_GPCR_Srsx"/>
    <property type="match status" value="1"/>
</dbReference>
<dbReference type="SUPFAM" id="SSF81321">
    <property type="entry name" value="Family A G protein-coupled receptor-like"/>
    <property type="match status" value="1"/>
</dbReference>
<dbReference type="PROSITE" id="PS00237">
    <property type="entry name" value="G_PROTEIN_RECEP_F1_1"/>
    <property type="match status" value="1"/>
</dbReference>
<dbReference type="PROSITE" id="PS50262">
    <property type="entry name" value="G_PROTEIN_RECEP_F1_2"/>
    <property type="match status" value="1"/>
</dbReference>
<evidence type="ECO:0000250" key="1">
    <source>
        <dbReference type="UniProtKB" id="Q01726"/>
    </source>
</evidence>
<evidence type="ECO:0000255" key="2"/>
<evidence type="ECO:0000255" key="3">
    <source>
        <dbReference type="PROSITE-ProRule" id="PRU00521"/>
    </source>
</evidence>